<proteinExistence type="inferred from homology"/>
<organism>
    <name type="scientific">Salmonella paratyphi C (strain RKS4594)</name>
    <dbReference type="NCBI Taxonomy" id="476213"/>
    <lineage>
        <taxon>Bacteria</taxon>
        <taxon>Pseudomonadati</taxon>
        <taxon>Pseudomonadota</taxon>
        <taxon>Gammaproteobacteria</taxon>
        <taxon>Enterobacterales</taxon>
        <taxon>Enterobacteriaceae</taxon>
        <taxon>Salmonella</taxon>
    </lineage>
</organism>
<protein>
    <recommendedName>
        <fullName evidence="1">DnaA initiator-associating protein DiaA</fullName>
    </recommendedName>
</protein>
<dbReference type="EMBL" id="CP000857">
    <property type="protein sequence ID" value="ACN47422.1"/>
    <property type="molecule type" value="Genomic_DNA"/>
</dbReference>
<dbReference type="RefSeq" id="WP_000893481.1">
    <property type="nucleotide sequence ID" value="NC_012125.1"/>
</dbReference>
<dbReference type="SMR" id="C0PZ34"/>
<dbReference type="GeneID" id="66757607"/>
<dbReference type="KEGG" id="sei:SPC_3337"/>
<dbReference type="HOGENOM" id="CLU_080999_3_1_6"/>
<dbReference type="Proteomes" id="UP000001599">
    <property type="component" value="Chromosome"/>
</dbReference>
<dbReference type="GO" id="GO:0097367">
    <property type="term" value="F:carbohydrate derivative binding"/>
    <property type="evidence" value="ECO:0007669"/>
    <property type="project" value="InterPro"/>
</dbReference>
<dbReference type="GO" id="GO:1901135">
    <property type="term" value="P:carbohydrate derivative metabolic process"/>
    <property type="evidence" value="ECO:0007669"/>
    <property type="project" value="InterPro"/>
</dbReference>
<dbReference type="GO" id="GO:0006260">
    <property type="term" value="P:DNA replication"/>
    <property type="evidence" value="ECO:0007669"/>
    <property type="project" value="UniProtKB-UniRule"/>
</dbReference>
<dbReference type="CDD" id="cd05006">
    <property type="entry name" value="SIS_GmhA"/>
    <property type="match status" value="1"/>
</dbReference>
<dbReference type="FunFam" id="3.40.50.10490:FF:000006">
    <property type="entry name" value="DnaA initiator-associating protein DiaA"/>
    <property type="match status" value="1"/>
</dbReference>
<dbReference type="Gene3D" id="3.40.50.10490">
    <property type="entry name" value="Glucose-6-phosphate isomerase like protein, domain 1"/>
    <property type="match status" value="1"/>
</dbReference>
<dbReference type="HAMAP" id="MF_01157">
    <property type="entry name" value="SIS_DiaA"/>
    <property type="match status" value="1"/>
</dbReference>
<dbReference type="InterPro" id="IPR023070">
    <property type="entry name" value="DiaA"/>
</dbReference>
<dbReference type="InterPro" id="IPR035461">
    <property type="entry name" value="GmhA/DiaA"/>
</dbReference>
<dbReference type="InterPro" id="IPR001347">
    <property type="entry name" value="SIS_dom"/>
</dbReference>
<dbReference type="InterPro" id="IPR046348">
    <property type="entry name" value="SIS_dom_sf"/>
</dbReference>
<dbReference type="InterPro" id="IPR050099">
    <property type="entry name" value="SIS_GmhA/DiaA_subfam"/>
</dbReference>
<dbReference type="NCBIfam" id="NF008138">
    <property type="entry name" value="PRK10886.1"/>
    <property type="match status" value="1"/>
</dbReference>
<dbReference type="PANTHER" id="PTHR30390:SF6">
    <property type="entry name" value="DNAA INITIATOR-ASSOCIATING PROTEIN DIAA"/>
    <property type="match status" value="1"/>
</dbReference>
<dbReference type="PANTHER" id="PTHR30390">
    <property type="entry name" value="SEDOHEPTULOSE 7-PHOSPHATE ISOMERASE / DNAA INITIATOR-ASSOCIATING FACTOR FOR REPLICATION INITIATION"/>
    <property type="match status" value="1"/>
</dbReference>
<dbReference type="Pfam" id="PF13580">
    <property type="entry name" value="SIS_2"/>
    <property type="match status" value="1"/>
</dbReference>
<dbReference type="SUPFAM" id="SSF53697">
    <property type="entry name" value="SIS domain"/>
    <property type="match status" value="1"/>
</dbReference>
<dbReference type="PROSITE" id="PS51464">
    <property type="entry name" value="SIS"/>
    <property type="match status" value="1"/>
</dbReference>
<comment type="function">
    <text evidence="1">Required for the timely initiation of chromosomal replication via direct interactions with the DnaA initiator protein.</text>
</comment>
<comment type="subunit">
    <text evidence="1">Homotetramer; dimer of dimers.</text>
</comment>
<comment type="similarity">
    <text evidence="1">Belongs to the SIS family. DiaA subfamily.</text>
</comment>
<feature type="chain" id="PRO_1000164296" description="DnaA initiator-associating protein DiaA">
    <location>
        <begin position="1"/>
        <end position="196"/>
    </location>
</feature>
<feature type="domain" description="SIS" evidence="1">
    <location>
        <begin position="34"/>
        <end position="196"/>
    </location>
</feature>
<reference key="1">
    <citation type="journal article" date="2009" name="PLoS ONE">
        <title>Salmonella paratyphi C: genetic divergence from Salmonella choleraesuis and pathogenic convergence with Salmonella typhi.</title>
        <authorList>
            <person name="Liu W.-Q."/>
            <person name="Feng Y."/>
            <person name="Wang Y."/>
            <person name="Zou Q.-H."/>
            <person name="Chen F."/>
            <person name="Guo J.-T."/>
            <person name="Peng Y.-H."/>
            <person name="Jin Y."/>
            <person name="Li Y.-G."/>
            <person name="Hu S.-N."/>
            <person name="Johnston R.N."/>
            <person name="Liu G.-R."/>
            <person name="Liu S.-L."/>
        </authorList>
    </citation>
    <scope>NUCLEOTIDE SEQUENCE [LARGE SCALE GENOMIC DNA]</scope>
    <source>
        <strain>RKS4594</strain>
    </source>
</reference>
<gene>
    <name evidence="1" type="primary">diaA</name>
    <name type="ordered locus">SPC_3337</name>
</gene>
<name>DIAA_SALPC</name>
<accession>C0PZ34</accession>
<sequence>MLERIKVCFTESIQTQIAAAEALPDAISRAAMTLVHSLLNGNKILCCGNGTSAANAQHFAASMINRFETERPSLPAIALNTDNVVLTAIANDRLHDEVYAKQVRALGHAGDVLLAISTRGNSRDIVKAVEAAVTRDMTIVALTGYDGGELAGLLGPQDVEIRIPSHHSARIQEMHMLTVNCLCDLIDNTLFPHQDD</sequence>
<keyword id="KW-0235">DNA replication</keyword>
<evidence type="ECO:0000255" key="1">
    <source>
        <dbReference type="HAMAP-Rule" id="MF_01157"/>
    </source>
</evidence>